<gene>
    <name type="primary">oppC</name>
    <name type="ordered locus">MG078</name>
</gene>
<keyword id="KW-1003">Cell membrane</keyword>
<keyword id="KW-0472">Membrane</keyword>
<keyword id="KW-0571">Peptide transport</keyword>
<keyword id="KW-0653">Protein transport</keyword>
<keyword id="KW-1185">Reference proteome</keyword>
<keyword id="KW-0812">Transmembrane</keyword>
<keyword id="KW-1133">Transmembrane helix</keyword>
<keyword id="KW-0813">Transport</keyword>
<proteinExistence type="inferred from homology"/>
<reference key="1">
    <citation type="journal article" date="1995" name="Science">
        <title>The minimal gene complement of Mycoplasma genitalium.</title>
        <authorList>
            <person name="Fraser C.M."/>
            <person name="Gocayne J.D."/>
            <person name="White O."/>
            <person name="Adams M.D."/>
            <person name="Clayton R.A."/>
            <person name="Fleischmann R.D."/>
            <person name="Bult C.J."/>
            <person name="Kerlavage A.R."/>
            <person name="Sutton G.G."/>
            <person name="Kelley J.M."/>
            <person name="Fritchman J.L."/>
            <person name="Weidman J.F."/>
            <person name="Small K.V."/>
            <person name="Sandusky M."/>
            <person name="Fuhrmann J.L."/>
            <person name="Nguyen D.T."/>
            <person name="Utterback T.R."/>
            <person name="Saudek D.M."/>
            <person name="Phillips C.A."/>
            <person name="Merrick J.M."/>
            <person name="Tomb J.-F."/>
            <person name="Dougherty B.A."/>
            <person name="Bott K.F."/>
            <person name="Hu P.-C."/>
            <person name="Lucier T.S."/>
            <person name="Peterson S.N."/>
            <person name="Smith H.O."/>
            <person name="Hutchison C.A. III"/>
            <person name="Venter J.C."/>
        </authorList>
    </citation>
    <scope>NUCLEOTIDE SEQUENCE [LARGE SCALE GENOMIC DNA]</scope>
    <source>
        <strain>ATCC 33530 / DSM 19775 / NCTC 10195 / G37</strain>
    </source>
</reference>
<accession>P47324</accession>
<comment type="function">
    <text evidence="1">Part of the ABC transporter complex OppABCDF involved in the uptake of oligopeptides (By similarity). Probably responsible for the translocation of the substrate across the membrane (By similarity).</text>
</comment>
<comment type="subunit">
    <text evidence="1">The complex is composed of two ATP-binding proteins (OppD and OppF), two transmembrane proteins (OppB and OppC) and a solute-binding protein (OppA).</text>
</comment>
<comment type="subcellular location">
    <subcellularLocation>
        <location evidence="1">Cell membrane</location>
        <topology evidence="2">Multi-pass membrane protein</topology>
    </subcellularLocation>
</comment>
<comment type="similarity">
    <text evidence="4">Belongs to the binding-protein-dependent transport system permease family. OppBC subfamily.</text>
</comment>
<organism>
    <name type="scientific">Mycoplasma genitalium (strain ATCC 33530 / DSM 19775 / NCTC 10195 / G37)</name>
    <name type="common">Mycoplasmoides genitalium</name>
    <dbReference type="NCBI Taxonomy" id="243273"/>
    <lineage>
        <taxon>Bacteria</taxon>
        <taxon>Bacillati</taxon>
        <taxon>Mycoplasmatota</taxon>
        <taxon>Mycoplasmoidales</taxon>
        <taxon>Mycoplasmoidaceae</taxon>
        <taxon>Mycoplasmoides</taxon>
    </lineage>
</organism>
<name>OPPC_MYCGE</name>
<evidence type="ECO:0000250" key="1">
    <source>
        <dbReference type="UniProtKB" id="P24139"/>
    </source>
</evidence>
<evidence type="ECO:0000255" key="2"/>
<evidence type="ECO:0000255" key="3">
    <source>
        <dbReference type="PROSITE-ProRule" id="PRU00441"/>
    </source>
</evidence>
<evidence type="ECO:0000305" key="4"/>
<sequence>MDRNKSFDPNLFKRVDINLLKRNDQLIGKPTTNSIEIIKRLFQNKWAILFFLLIVVIVLLAIIVPLTSPFSAVTPVSTNALAQNLPPRYLWHKPGDILVHKITARSIAEISQASGVLVGTLPSANSNPLATNVQYDIAPFQLQELRNYFPLLGTNGLGIDIWTLLWASVAKSLWIAVVVAIIAMVFGTIYGAVAGSFVGHMADNIMSRIIEIIDIVPSILWIIVLGATFRFGGVKQFDDSVVIFTLIFVFWTWPATTTRIYILKNKDTEYIQAAKTLGAHQIRIIFVHMLPVVFGRLAVVFVSLIPAVIGYEASLVFLGLKPATDIGLGALLNQVTSSDNVALILSSIVSFAVLTVAARTFANALNDAIDPRVVKR</sequence>
<protein>
    <recommendedName>
        <fullName evidence="4">Oligopeptide transport system permease protein OppC</fullName>
    </recommendedName>
</protein>
<dbReference type="EMBL" id="L43967">
    <property type="protein sequence ID" value="AAC71296.1"/>
    <property type="molecule type" value="Genomic_DNA"/>
</dbReference>
<dbReference type="PIR" id="F64208">
    <property type="entry name" value="F64208"/>
</dbReference>
<dbReference type="RefSeq" id="WP_009885933.1">
    <property type="nucleotide sequence ID" value="NC_000908.2"/>
</dbReference>
<dbReference type="SMR" id="P47324"/>
<dbReference type="FunCoup" id="P47324">
    <property type="interactions" value="132"/>
</dbReference>
<dbReference type="STRING" id="243273.MG_078"/>
<dbReference type="GeneID" id="88282201"/>
<dbReference type="KEGG" id="mge:MG_078"/>
<dbReference type="eggNOG" id="COG1173">
    <property type="taxonomic scope" value="Bacteria"/>
</dbReference>
<dbReference type="HOGENOM" id="CLU_028518_1_0_14"/>
<dbReference type="InParanoid" id="P47324"/>
<dbReference type="OrthoDB" id="9788103at2"/>
<dbReference type="BioCyc" id="MGEN243273:G1GJ2-90-MONOMER"/>
<dbReference type="Proteomes" id="UP000000807">
    <property type="component" value="Chromosome"/>
</dbReference>
<dbReference type="GO" id="GO:0005886">
    <property type="term" value="C:plasma membrane"/>
    <property type="evidence" value="ECO:0000318"/>
    <property type="project" value="GO_Central"/>
</dbReference>
<dbReference type="GO" id="GO:0022857">
    <property type="term" value="F:transmembrane transporter activity"/>
    <property type="evidence" value="ECO:0000318"/>
    <property type="project" value="GO_Central"/>
</dbReference>
<dbReference type="GO" id="GO:0015833">
    <property type="term" value="P:peptide transport"/>
    <property type="evidence" value="ECO:0007669"/>
    <property type="project" value="UniProtKB-KW"/>
</dbReference>
<dbReference type="GO" id="GO:0015031">
    <property type="term" value="P:protein transport"/>
    <property type="evidence" value="ECO:0007669"/>
    <property type="project" value="UniProtKB-KW"/>
</dbReference>
<dbReference type="CDD" id="cd06261">
    <property type="entry name" value="TM_PBP2"/>
    <property type="match status" value="1"/>
</dbReference>
<dbReference type="Gene3D" id="1.10.3720.10">
    <property type="entry name" value="MetI-like"/>
    <property type="match status" value="1"/>
</dbReference>
<dbReference type="InterPro" id="IPR050366">
    <property type="entry name" value="BP-dependent_transpt_permease"/>
</dbReference>
<dbReference type="InterPro" id="IPR000515">
    <property type="entry name" value="MetI-like"/>
</dbReference>
<dbReference type="InterPro" id="IPR035906">
    <property type="entry name" value="MetI-like_sf"/>
</dbReference>
<dbReference type="InterPro" id="IPR025966">
    <property type="entry name" value="OppC_N"/>
</dbReference>
<dbReference type="PANTHER" id="PTHR43386:SF24">
    <property type="entry name" value="OLIGOPEPTIDE TRANSPORT SYSTEM PERMEASE PROTEIN AMID"/>
    <property type="match status" value="1"/>
</dbReference>
<dbReference type="PANTHER" id="PTHR43386">
    <property type="entry name" value="OLIGOPEPTIDE TRANSPORT SYSTEM PERMEASE PROTEIN APPC"/>
    <property type="match status" value="1"/>
</dbReference>
<dbReference type="Pfam" id="PF00528">
    <property type="entry name" value="BPD_transp_1"/>
    <property type="match status" value="1"/>
</dbReference>
<dbReference type="Pfam" id="PF12911">
    <property type="entry name" value="OppC_N"/>
    <property type="match status" value="1"/>
</dbReference>
<dbReference type="SUPFAM" id="SSF161098">
    <property type="entry name" value="MetI-like"/>
    <property type="match status" value="1"/>
</dbReference>
<dbReference type="PROSITE" id="PS50928">
    <property type="entry name" value="ABC_TM1"/>
    <property type="match status" value="1"/>
</dbReference>
<feature type="chain" id="PRO_0000060141" description="Oligopeptide transport system permease protein OppC">
    <location>
        <begin position="1"/>
        <end position="376"/>
    </location>
</feature>
<feature type="transmembrane region" description="Helical" evidence="3">
    <location>
        <begin position="46"/>
        <end position="66"/>
    </location>
</feature>
<feature type="transmembrane region" description="Helical" evidence="3">
    <location>
        <begin position="149"/>
        <end position="169"/>
    </location>
</feature>
<feature type="transmembrane region" description="Helical" evidence="3">
    <location>
        <begin position="173"/>
        <end position="193"/>
    </location>
</feature>
<feature type="transmembrane region" description="Helical" evidence="3">
    <location>
        <begin position="209"/>
        <end position="229"/>
    </location>
</feature>
<feature type="transmembrane region" description="Helical" evidence="3">
    <location>
        <begin position="242"/>
        <end position="262"/>
    </location>
</feature>
<feature type="transmembrane region" description="Helical" evidence="3">
    <location>
        <begin position="297"/>
        <end position="317"/>
    </location>
</feature>
<feature type="transmembrane region" description="Helical" evidence="3">
    <location>
        <begin position="341"/>
        <end position="361"/>
    </location>
</feature>
<feature type="domain" description="ABC transmembrane type-1" evidence="3">
    <location>
        <begin position="169"/>
        <end position="366"/>
    </location>
</feature>